<sequence>MISVNDFKTGLTISVDNAIWKVIDFQHVKPGKGSAFVRSKLRNLRTGAIQEKTFRAGEKVEPAMIENRRMQYLYADGDNHVFMDNESFEQTELSSDYLKEELNYLKEGMEVQIQTYEGETIGVELPKTVELTVTETEPGIKGDTATGATKSATVETGYTLNVPLFVNEGDVLIINTGDGSYISRG</sequence>
<name>EFP_STAAM</name>
<evidence type="ECO:0000255" key="1">
    <source>
        <dbReference type="HAMAP-Rule" id="MF_00141"/>
    </source>
</evidence>
<comment type="function">
    <text evidence="1">Involved in peptide bond synthesis. Stimulates efficient translation and peptide-bond synthesis on native or reconstituted 70S ribosomes in vitro. Probably functions indirectly by altering the affinity of the ribosome for aminoacyl-tRNA, thus increasing their reactivity as acceptors for peptidyl transferase.</text>
</comment>
<comment type="pathway">
    <text evidence="1">Protein biosynthesis; polypeptide chain elongation.</text>
</comment>
<comment type="subcellular location">
    <subcellularLocation>
        <location evidence="1">Cytoplasm</location>
    </subcellularLocation>
</comment>
<comment type="similarity">
    <text evidence="1">Belongs to the elongation factor P family.</text>
</comment>
<dbReference type="EMBL" id="BA000017">
    <property type="protein sequence ID" value="BAB57690.1"/>
    <property type="molecule type" value="Genomic_DNA"/>
</dbReference>
<dbReference type="RefSeq" id="WP_000626504.1">
    <property type="nucleotide sequence ID" value="NC_002758.2"/>
</dbReference>
<dbReference type="SMR" id="P64038"/>
<dbReference type="KEGG" id="sav:SAV1528"/>
<dbReference type="HOGENOM" id="CLU_074944_0_1_9"/>
<dbReference type="PhylomeDB" id="P64038"/>
<dbReference type="UniPathway" id="UPA00345"/>
<dbReference type="Proteomes" id="UP000002481">
    <property type="component" value="Chromosome"/>
</dbReference>
<dbReference type="GO" id="GO:0005737">
    <property type="term" value="C:cytoplasm"/>
    <property type="evidence" value="ECO:0007669"/>
    <property type="project" value="UniProtKB-SubCell"/>
</dbReference>
<dbReference type="GO" id="GO:0003746">
    <property type="term" value="F:translation elongation factor activity"/>
    <property type="evidence" value="ECO:0007669"/>
    <property type="project" value="UniProtKB-UniRule"/>
</dbReference>
<dbReference type="GO" id="GO:0043043">
    <property type="term" value="P:peptide biosynthetic process"/>
    <property type="evidence" value="ECO:0007669"/>
    <property type="project" value="InterPro"/>
</dbReference>
<dbReference type="CDD" id="cd04470">
    <property type="entry name" value="S1_EF-P_repeat_1"/>
    <property type="match status" value="1"/>
</dbReference>
<dbReference type="CDD" id="cd05794">
    <property type="entry name" value="S1_EF-P_repeat_2"/>
    <property type="match status" value="1"/>
</dbReference>
<dbReference type="FunFam" id="2.30.30.30:FF:000010">
    <property type="entry name" value="Elongation factor P"/>
    <property type="match status" value="1"/>
</dbReference>
<dbReference type="FunFam" id="2.40.50.140:FF:000004">
    <property type="entry name" value="Elongation factor P"/>
    <property type="match status" value="1"/>
</dbReference>
<dbReference type="FunFam" id="2.40.50.140:FF:000009">
    <property type="entry name" value="Elongation factor P"/>
    <property type="match status" value="1"/>
</dbReference>
<dbReference type="Gene3D" id="2.30.30.30">
    <property type="match status" value="1"/>
</dbReference>
<dbReference type="Gene3D" id="2.40.50.140">
    <property type="entry name" value="Nucleic acid-binding proteins"/>
    <property type="match status" value="2"/>
</dbReference>
<dbReference type="HAMAP" id="MF_00141">
    <property type="entry name" value="EF_P"/>
    <property type="match status" value="1"/>
</dbReference>
<dbReference type="InterPro" id="IPR015365">
    <property type="entry name" value="Elong-fact-P_C"/>
</dbReference>
<dbReference type="InterPro" id="IPR012340">
    <property type="entry name" value="NA-bd_OB-fold"/>
</dbReference>
<dbReference type="InterPro" id="IPR014722">
    <property type="entry name" value="Rib_uL2_dom2"/>
</dbReference>
<dbReference type="InterPro" id="IPR020599">
    <property type="entry name" value="Transl_elong_fac_P/YeiP"/>
</dbReference>
<dbReference type="InterPro" id="IPR013185">
    <property type="entry name" value="Transl_elong_KOW-like"/>
</dbReference>
<dbReference type="InterPro" id="IPR001059">
    <property type="entry name" value="Transl_elong_P/YeiP_cen"/>
</dbReference>
<dbReference type="InterPro" id="IPR013852">
    <property type="entry name" value="Transl_elong_P/YeiP_CS"/>
</dbReference>
<dbReference type="InterPro" id="IPR011768">
    <property type="entry name" value="Transl_elongation_fac_P"/>
</dbReference>
<dbReference type="InterPro" id="IPR008991">
    <property type="entry name" value="Translation_prot_SH3-like_sf"/>
</dbReference>
<dbReference type="NCBIfam" id="TIGR00038">
    <property type="entry name" value="efp"/>
    <property type="match status" value="1"/>
</dbReference>
<dbReference type="NCBIfam" id="NF001810">
    <property type="entry name" value="PRK00529.1"/>
    <property type="match status" value="1"/>
</dbReference>
<dbReference type="PANTHER" id="PTHR30053">
    <property type="entry name" value="ELONGATION FACTOR P"/>
    <property type="match status" value="1"/>
</dbReference>
<dbReference type="PANTHER" id="PTHR30053:SF12">
    <property type="entry name" value="ELONGATION FACTOR P (EF-P) FAMILY PROTEIN"/>
    <property type="match status" value="1"/>
</dbReference>
<dbReference type="Pfam" id="PF01132">
    <property type="entry name" value="EFP"/>
    <property type="match status" value="1"/>
</dbReference>
<dbReference type="Pfam" id="PF08207">
    <property type="entry name" value="EFP_N"/>
    <property type="match status" value="1"/>
</dbReference>
<dbReference type="Pfam" id="PF09285">
    <property type="entry name" value="Elong-fact-P_C"/>
    <property type="match status" value="1"/>
</dbReference>
<dbReference type="PIRSF" id="PIRSF005901">
    <property type="entry name" value="EF-P"/>
    <property type="match status" value="1"/>
</dbReference>
<dbReference type="SMART" id="SM01185">
    <property type="entry name" value="EFP"/>
    <property type="match status" value="1"/>
</dbReference>
<dbReference type="SMART" id="SM00841">
    <property type="entry name" value="Elong-fact-P_C"/>
    <property type="match status" value="1"/>
</dbReference>
<dbReference type="SUPFAM" id="SSF50249">
    <property type="entry name" value="Nucleic acid-binding proteins"/>
    <property type="match status" value="2"/>
</dbReference>
<dbReference type="SUPFAM" id="SSF50104">
    <property type="entry name" value="Translation proteins SH3-like domain"/>
    <property type="match status" value="1"/>
</dbReference>
<dbReference type="PROSITE" id="PS01275">
    <property type="entry name" value="EFP"/>
    <property type="match status" value="1"/>
</dbReference>
<feature type="chain" id="PRO_0000094329" description="Elongation factor P">
    <location>
        <begin position="1"/>
        <end position="185"/>
    </location>
</feature>
<accession>P64038</accession>
<accession>Q99TW5</accession>
<organism>
    <name type="scientific">Staphylococcus aureus (strain Mu50 / ATCC 700699)</name>
    <dbReference type="NCBI Taxonomy" id="158878"/>
    <lineage>
        <taxon>Bacteria</taxon>
        <taxon>Bacillati</taxon>
        <taxon>Bacillota</taxon>
        <taxon>Bacilli</taxon>
        <taxon>Bacillales</taxon>
        <taxon>Staphylococcaceae</taxon>
        <taxon>Staphylococcus</taxon>
    </lineage>
</organism>
<gene>
    <name evidence="1" type="primary">efp</name>
    <name type="ordered locus">SAV1528</name>
</gene>
<protein>
    <recommendedName>
        <fullName evidence="1">Elongation factor P</fullName>
        <shortName evidence="1">EF-P</shortName>
    </recommendedName>
</protein>
<reference key="1">
    <citation type="journal article" date="2001" name="Lancet">
        <title>Whole genome sequencing of meticillin-resistant Staphylococcus aureus.</title>
        <authorList>
            <person name="Kuroda M."/>
            <person name="Ohta T."/>
            <person name="Uchiyama I."/>
            <person name="Baba T."/>
            <person name="Yuzawa H."/>
            <person name="Kobayashi I."/>
            <person name="Cui L."/>
            <person name="Oguchi A."/>
            <person name="Aoki K."/>
            <person name="Nagai Y."/>
            <person name="Lian J.-Q."/>
            <person name="Ito T."/>
            <person name="Kanamori M."/>
            <person name="Matsumaru H."/>
            <person name="Maruyama A."/>
            <person name="Murakami H."/>
            <person name="Hosoyama A."/>
            <person name="Mizutani-Ui Y."/>
            <person name="Takahashi N.K."/>
            <person name="Sawano T."/>
            <person name="Inoue R."/>
            <person name="Kaito C."/>
            <person name="Sekimizu K."/>
            <person name="Hirakawa H."/>
            <person name="Kuhara S."/>
            <person name="Goto S."/>
            <person name="Yabuzaki J."/>
            <person name="Kanehisa M."/>
            <person name="Yamashita A."/>
            <person name="Oshima K."/>
            <person name="Furuya K."/>
            <person name="Yoshino C."/>
            <person name="Shiba T."/>
            <person name="Hattori M."/>
            <person name="Ogasawara N."/>
            <person name="Hayashi H."/>
            <person name="Hiramatsu K."/>
        </authorList>
    </citation>
    <scope>NUCLEOTIDE SEQUENCE [LARGE SCALE GENOMIC DNA]</scope>
    <source>
        <strain>Mu50 / ATCC 700699</strain>
    </source>
</reference>
<keyword id="KW-0963">Cytoplasm</keyword>
<keyword id="KW-0251">Elongation factor</keyword>
<keyword id="KW-0648">Protein biosynthesis</keyword>
<proteinExistence type="inferred from homology"/>